<reference key="1">
    <citation type="journal article" date="2005" name="Genome Res.">
        <title>Genome sequence of Blochmannia pennsylvanicus indicates parallel evolutionary trends among bacterial mutualists of insects.</title>
        <authorList>
            <person name="Degnan P.H."/>
            <person name="Lazarus A.B."/>
            <person name="Wernegreen J.J."/>
        </authorList>
    </citation>
    <scope>NUCLEOTIDE SEQUENCE [LARGE SCALE GENOMIC DNA]</scope>
    <source>
        <strain>BPEN</strain>
    </source>
</reference>
<keyword id="KW-0067">ATP-binding</keyword>
<keyword id="KW-0418">Kinase</keyword>
<keyword id="KW-0545">Nucleotide biosynthesis</keyword>
<keyword id="KW-0547">Nucleotide-binding</keyword>
<keyword id="KW-1185">Reference proteome</keyword>
<keyword id="KW-0808">Transferase</keyword>
<protein>
    <recommendedName>
        <fullName evidence="1">Thymidylate kinase</fullName>
        <ecNumber evidence="1">2.7.4.9</ecNumber>
    </recommendedName>
    <alternativeName>
        <fullName evidence="1">dTMP kinase</fullName>
    </alternativeName>
</protein>
<proteinExistence type="inferred from homology"/>
<accession>Q492Q6</accession>
<sequence>MDNRFITIEGLDGAGKTTITHRVSKYLNQYGVTDILTTHEPGGTPVSDFLRVLIKYGGPMNEPINSISELLMIYAARLQLIENVIKPALSKGYWVIGDRFDLSSQAYQGGGRGIDILLLHALSNKITNTLSPDLTFYLDISPELSISRINHRQKLDRIEQEPLSFFDRVRSCYKKLASERKNIITIDATQSLEEVSMSIYRHLDWWFLRPQE</sequence>
<organism>
    <name type="scientific">Blochmanniella pennsylvanica (strain BPEN)</name>
    <dbReference type="NCBI Taxonomy" id="291272"/>
    <lineage>
        <taxon>Bacteria</taxon>
        <taxon>Pseudomonadati</taxon>
        <taxon>Pseudomonadota</taxon>
        <taxon>Gammaproteobacteria</taxon>
        <taxon>Enterobacterales</taxon>
        <taxon>Enterobacteriaceae</taxon>
        <taxon>ant endosymbionts</taxon>
        <taxon>Candidatus Blochmanniella</taxon>
    </lineage>
</organism>
<evidence type="ECO:0000255" key="1">
    <source>
        <dbReference type="HAMAP-Rule" id="MF_00165"/>
    </source>
</evidence>
<name>KTHY_BLOPB</name>
<feature type="chain" id="PRO_1000023151" description="Thymidylate kinase">
    <location>
        <begin position="1"/>
        <end position="212"/>
    </location>
</feature>
<feature type="binding site" evidence="1">
    <location>
        <begin position="10"/>
        <end position="17"/>
    </location>
    <ligand>
        <name>ATP</name>
        <dbReference type="ChEBI" id="CHEBI:30616"/>
    </ligand>
</feature>
<dbReference type="EC" id="2.7.4.9" evidence="1"/>
<dbReference type="EMBL" id="CP000016">
    <property type="protein sequence ID" value="AAZ41037.1"/>
    <property type="molecule type" value="Genomic_DNA"/>
</dbReference>
<dbReference type="RefSeq" id="WP_011282946.1">
    <property type="nucleotide sequence ID" value="NC_007292.1"/>
</dbReference>
<dbReference type="SMR" id="Q492Q6"/>
<dbReference type="STRING" id="291272.BPEN_413"/>
<dbReference type="KEGG" id="bpn:BPEN_413"/>
<dbReference type="eggNOG" id="COG0125">
    <property type="taxonomic scope" value="Bacteria"/>
</dbReference>
<dbReference type="HOGENOM" id="CLU_049131_0_1_6"/>
<dbReference type="OrthoDB" id="9774907at2"/>
<dbReference type="Proteomes" id="UP000007794">
    <property type="component" value="Chromosome"/>
</dbReference>
<dbReference type="GO" id="GO:0005829">
    <property type="term" value="C:cytosol"/>
    <property type="evidence" value="ECO:0007669"/>
    <property type="project" value="TreeGrafter"/>
</dbReference>
<dbReference type="GO" id="GO:0005524">
    <property type="term" value="F:ATP binding"/>
    <property type="evidence" value="ECO:0007669"/>
    <property type="project" value="UniProtKB-UniRule"/>
</dbReference>
<dbReference type="GO" id="GO:0004798">
    <property type="term" value="F:dTMP kinase activity"/>
    <property type="evidence" value="ECO:0007669"/>
    <property type="project" value="UniProtKB-UniRule"/>
</dbReference>
<dbReference type="GO" id="GO:0006233">
    <property type="term" value="P:dTDP biosynthetic process"/>
    <property type="evidence" value="ECO:0007669"/>
    <property type="project" value="InterPro"/>
</dbReference>
<dbReference type="GO" id="GO:0006235">
    <property type="term" value="P:dTTP biosynthetic process"/>
    <property type="evidence" value="ECO:0007669"/>
    <property type="project" value="UniProtKB-UniRule"/>
</dbReference>
<dbReference type="GO" id="GO:0006227">
    <property type="term" value="P:dUDP biosynthetic process"/>
    <property type="evidence" value="ECO:0007669"/>
    <property type="project" value="TreeGrafter"/>
</dbReference>
<dbReference type="CDD" id="cd01672">
    <property type="entry name" value="TMPK"/>
    <property type="match status" value="1"/>
</dbReference>
<dbReference type="FunFam" id="3.40.50.300:FF:000225">
    <property type="entry name" value="Thymidylate kinase"/>
    <property type="match status" value="1"/>
</dbReference>
<dbReference type="Gene3D" id="3.40.50.300">
    <property type="entry name" value="P-loop containing nucleotide triphosphate hydrolases"/>
    <property type="match status" value="1"/>
</dbReference>
<dbReference type="HAMAP" id="MF_00165">
    <property type="entry name" value="Thymidylate_kinase"/>
    <property type="match status" value="1"/>
</dbReference>
<dbReference type="InterPro" id="IPR027417">
    <property type="entry name" value="P-loop_NTPase"/>
</dbReference>
<dbReference type="InterPro" id="IPR039430">
    <property type="entry name" value="Thymidylate_kin-like_dom"/>
</dbReference>
<dbReference type="InterPro" id="IPR018095">
    <property type="entry name" value="Thymidylate_kin_CS"/>
</dbReference>
<dbReference type="InterPro" id="IPR018094">
    <property type="entry name" value="Thymidylate_kinase"/>
</dbReference>
<dbReference type="NCBIfam" id="TIGR00041">
    <property type="entry name" value="DTMP_kinase"/>
    <property type="match status" value="1"/>
</dbReference>
<dbReference type="PANTHER" id="PTHR10344">
    <property type="entry name" value="THYMIDYLATE KINASE"/>
    <property type="match status" value="1"/>
</dbReference>
<dbReference type="PANTHER" id="PTHR10344:SF4">
    <property type="entry name" value="UMP-CMP KINASE 2, MITOCHONDRIAL"/>
    <property type="match status" value="1"/>
</dbReference>
<dbReference type="Pfam" id="PF02223">
    <property type="entry name" value="Thymidylate_kin"/>
    <property type="match status" value="1"/>
</dbReference>
<dbReference type="SUPFAM" id="SSF52540">
    <property type="entry name" value="P-loop containing nucleoside triphosphate hydrolases"/>
    <property type="match status" value="1"/>
</dbReference>
<dbReference type="PROSITE" id="PS01331">
    <property type="entry name" value="THYMIDYLATE_KINASE"/>
    <property type="match status" value="1"/>
</dbReference>
<comment type="function">
    <text evidence="1">Phosphorylation of dTMP to form dTDP in both de novo and salvage pathways of dTTP synthesis.</text>
</comment>
<comment type="catalytic activity">
    <reaction evidence="1">
        <text>dTMP + ATP = dTDP + ADP</text>
        <dbReference type="Rhea" id="RHEA:13517"/>
        <dbReference type="ChEBI" id="CHEBI:30616"/>
        <dbReference type="ChEBI" id="CHEBI:58369"/>
        <dbReference type="ChEBI" id="CHEBI:63528"/>
        <dbReference type="ChEBI" id="CHEBI:456216"/>
        <dbReference type="EC" id="2.7.4.9"/>
    </reaction>
</comment>
<comment type="similarity">
    <text evidence="1">Belongs to the thymidylate kinase family.</text>
</comment>
<gene>
    <name evidence="1" type="primary">tmk</name>
    <name type="ordered locus">BPEN_413</name>
</gene>